<accession>Q04MC1</accession>
<keyword id="KW-1185">Reference proteome</keyword>
<gene>
    <name type="ordered locus">SPD_0310</name>
</gene>
<proteinExistence type="inferred from homology"/>
<evidence type="ECO:0000255" key="1">
    <source>
        <dbReference type="HAMAP-Rule" id="MF_01567"/>
    </source>
</evidence>
<organism>
    <name type="scientific">Streptococcus pneumoniae serotype 2 (strain D39 / NCTC 7466)</name>
    <dbReference type="NCBI Taxonomy" id="373153"/>
    <lineage>
        <taxon>Bacteria</taxon>
        <taxon>Bacillati</taxon>
        <taxon>Bacillota</taxon>
        <taxon>Bacilli</taxon>
        <taxon>Lactobacillales</taxon>
        <taxon>Streptococcaceae</taxon>
        <taxon>Streptococcus</taxon>
    </lineage>
</organism>
<sequence length="494" mass="55065">MKKQAFSSEQYLNLQRDHILERINQFDGKLYLEFGGKMLEDFHAARVLPGYEPDNKIKLLQELKEQVEVVIAINASNIEHSKARGDLGISYDQEVLRLIDKFNELGIFVGSVVITQYAGQPAADAFRNQLEKNGIDSYLHYPIKGYPTDMDHIISPEGMGKNDYIKTSRNLIVVTAPGPGSGKLATCMSNMYHDQINGIKSGYAKFETFPIWNLPLHHPVNLAYEAATADLDDVNMIDPFHLQTYGETTVNYNRDIEIFPVLKRMLERILGKSPYASPTDMGVNMVGFAITDDEAAVEASKQEIIRRYYQTVLDFKAEKVGEAAVKKIELLMNDLGITPADRKVAVVARQKAEETGGPALAFELPNGEIVTGKNSELFGPTAAALINAIKKSADIAKEVKLIEPEVVKPIQGLKIDHLGSRNPRLHSNEILIALAITATENPDAARAMEELGNLKGSEAHSTIILTDEDKNVLRKLGINVTFDPYYQYDRLYRK</sequence>
<feature type="chain" id="PRO_1000069097" description="UPF0371 protein SPD_0310">
    <location>
        <begin position="1"/>
        <end position="494"/>
    </location>
</feature>
<reference key="1">
    <citation type="journal article" date="2007" name="J. Bacteriol.">
        <title>Genome sequence of Avery's virulent serotype 2 strain D39 of Streptococcus pneumoniae and comparison with that of unencapsulated laboratory strain R6.</title>
        <authorList>
            <person name="Lanie J.A."/>
            <person name="Ng W.-L."/>
            <person name="Kazmierczak K.M."/>
            <person name="Andrzejewski T.M."/>
            <person name="Davidsen T.M."/>
            <person name="Wayne K.J."/>
            <person name="Tettelin H."/>
            <person name="Glass J.I."/>
            <person name="Winkler M.E."/>
        </authorList>
    </citation>
    <scope>NUCLEOTIDE SEQUENCE [LARGE SCALE GENOMIC DNA]</scope>
    <source>
        <strain>D39 / NCTC 7466</strain>
    </source>
</reference>
<dbReference type="EMBL" id="CP000410">
    <property type="protein sequence ID" value="ABJ54480.1"/>
    <property type="molecule type" value="Genomic_DNA"/>
</dbReference>
<dbReference type="RefSeq" id="WP_000743599.1">
    <property type="nucleotide sequence ID" value="NZ_JAMLJR010000002.1"/>
</dbReference>
<dbReference type="SMR" id="Q04MC1"/>
<dbReference type="PaxDb" id="373153-SPD_0310"/>
<dbReference type="KEGG" id="spd:SPD_0310"/>
<dbReference type="eggNOG" id="COG4868">
    <property type="taxonomic scope" value="Bacteria"/>
</dbReference>
<dbReference type="HOGENOM" id="CLU_046981_0_0_9"/>
<dbReference type="BioCyc" id="SPNE373153:G1G6V-343-MONOMER"/>
<dbReference type="Proteomes" id="UP000001452">
    <property type="component" value="Chromosome"/>
</dbReference>
<dbReference type="Gene3D" id="1.20.1570.10">
    <property type="entry name" value="dip2346 domain like"/>
    <property type="match status" value="1"/>
</dbReference>
<dbReference type="Gene3D" id="3.10.630.10">
    <property type="entry name" value="dip2346 domain like"/>
    <property type="match status" value="1"/>
</dbReference>
<dbReference type="Gene3D" id="3.40.140.40">
    <property type="entry name" value="Domain of unknown function (DUF1846), C-terminal subdomain"/>
    <property type="match status" value="1"/>
</dbReference>
<dbReference type="HAMAP" id="MF_01567">
    <property type="entry name" value="UPF0371"/>
    <property type="match status" value="1"/>
</dbReference>
<dbReference type="InterPro" id="IPR014999">
    <property type="entry name" value="DUF1846"/>
</dbReference>
<dbReference type="InterPro" id="IPR048441">
    <property type="entry name" value="DUF1846_C"/>
</dbReference>
<dbReference type="InterPro" id="IPR048496">
    <property type="entry name" value="DUF1846_N"/>
</dbReference>
<dbReference type="NCBIfam" id="NF010184">
    <property type="entry name" value="PRK13663.1"/>
    <property type="match status" value="1"/>
</dbReference>
<dbReference type="Pfam" id="PF08903">
    <property type="entry name" value="DUF1846"/>
    <property type="match status" value="1"/>
</dbReference>
<dbReference type="Pfam" id="PF20921">
    <property type="entry name" value="DUF1846_C"/>
    <property type="match status" value="1"/>
</dbReference>
<dbReference type="PIRSF" id="PIRSF033132">
    <property type="entry name" value="DUF1846"/>
    <property type="match status" value="1"/>
</dbReference>
<comment type="similarity">
    <text evidence="1">Belongs to the UPF0371 family.</text>
</comment>
<name>Y310_STRP2</name>
<protein>
    <recommendedName>
        <fullName evidence="1">UPF0371 protein SPD_0310</fullName>
    </recommendedName>
</protein>